<accession>Q90963</accession>
<gene>
    <name type="primary">PRRX2</name>
    <name type="synonym">PMX2</name>
    <name type="synonym">PRX2</name>
    <name type="synonym">S8</name>
</gene>
<comment type="function">
    <text>May play a role in development of the heart.</text>
</comment>
<comment type="subcellular location">
    <subcellularLocation>
        <location evidence="1 2">Nucleus</location>
    </subcellularLocation>
</comment>
<comment type="tissue specificity">
    <text>Cranial mesenchyme, limb buds, axial mesoderm, and branchial arches and their derivatives. Also found in the heart especially in the ventricular septum and ductus arteriosus.</text>
</comment>
<comment type="developmental stage">
    <text>Expressed at high levels in 8.5 day embryos in the mandibular arch while a lower expression is seen in the extraembryonic mesoderm. Expression is abundant at days 8.5 and 9.5 in the developing visceral arches and the splanchnic mesoderm surrounding the gut. Present in the myocardium from days 8.5-12.5. At day 14.5 present in valves and extensively in the ventricular septum.</text>
</comment>
<comment type="similarity">
    <text evidence="4">Belongs to the paired homeobox family.</text>
</comment>
<name>PRRX2_CHICK</name>
<keyword id="KW-0217">Developmental protein</keyword>
<keyword id="KW-0238">DNA-binding</keyword>
<keyword id="KW-0371">Homeobox</keyword>
<keyword id="KW-0539">Nucleus</keyword>
<keyword id="KW-1185">Reference proteome</keyword>
<reference key="1">
    <citation type="journal article" date="1995" name="Mech. Dev.">
        <title>Expression patterns of the paired-related homeobox genes MHox/Prx1 and S8/Prx2 suggest roles in development of the heart and the forebrain.</title>
        <authorList>
            <person name="Leussink B."/>
            <person name="Brouwer A."/>
            <person name="el Khattabi M."/>
            <person name="Poelmann R.E."/>
            <person name="Gittenberger-De Groot A.C."/>
            <person name="Meijlink F."/>
        </authorList>
    </citation>
    <scope>NUCLEOTIDE SEQUENCE [MRNA]</scope>
    <source>
        <tissue>Embryo</tissue>
    </source>
</reference>
<feature type="chain" id="PRO_0000049257" description="Paired mesoderm homeobox protein 2">
    <location>
        <begin position="1" status="less than"/>
        <end position="165"/>
    </location>
</feature>
<feature type="DNA-binding region" description="Homeobox" evidence="1">
    <location>
        <begin position="16"/>
        <end position="75"/>
    </location>
</feature>
<feature type="region of interest" description="Disordered" evidence="3">
    <location>
        <begin position="1"/>
        <end position="24"/>
    </location>
</feature>
<feature type="short sequence motif" description="OAR" evidence="2">
    <location>
        <begin position="142"/>
        <end position="155"/>
    </location>
</feature>
<feature type="compositionally biased region" description="Basic residues" evidence="3">
    <location>
        <begin position="9"/>
        <end position="20"/>
    </location>
</feature>
<feature type="non-terminal residue">
    <location>
        <position position="1"/>
    </location>
</feature>
<organism>
    <name type="scientific">Gallus gallus</name>
    <name type="common">Chicken</name>
    <dbReference type="NCBI Taxonomy" id="9031"/>
    <lineage>
        <taxon>Eukaryota</taxon>
        <taxon>Metazoa</taxon>
        <taxon>Chordata</taxon>
        <taxon>Craniata</taxon>
        <taxon>Vertebrata</taxon>
        <taxon>Euteleostomi</taxon>
        <taxon>Archelosauria</taxon>
        <taxon>Archosauria</taxon>
        <taxon>Dinosauria</taxon>
        <taxon>Saurischia</taxon>
        <taxon>Theropoda</taxon>
        <taxon>Coelurosauria</taxon>
        <taxon>Aves</taxon>
        <taxon>Neognathae</taxon>
        <taxon>Galloanserae</taxon>
        <taxon>Galliformes</taxon>
        <taxon>Phasianidae</taxon>
        <taxon>Phasianinae</taxon>
        <taxon>Gallus</taxon>
    </lineage>
</organism>
<protein>
    <recommendedName>
        <fullName>Paired mesoderm homeobox protein 2</fullName>
        <shortName>PRX-2</shortName>
    </recommendedName>
</protein>
<evidence type="ECO:0000255" key="1">
    <source>
        <dbReference type="PROSITE-ProRule" id="PRU00108"/>
    </source>
</evidence>
<evidence type="ECO:0000255" key="2">
    <source>
        <dbReference type="PROSITE-ProRule" id="PRU00138"/>
    </source>
</evidence>
<evidence type="ECO:0000256" key="3">
    <source>
        <dbReference type="SAM" id="MobiDB-lite"/>
    </source>
</evidence>
<evidence type="ECO:0000305" key="4"/>
<proteinExistence type="evidence at transcript level"/>
<sequence length="165" mass="18691">ESLSPSRGVAKRKKKQRRNRTTFNSSQLQALERVFERTHYPDAFVREELARRVNLSEARVQVWFQNRRAKFRRNERAMLANRSASLLKSYSQEAAIEQPMAPRPTALSPEYLSWSSSSPYSTVPSYSSSGTATAAQGVNMANSIASLRLKAKEFSLHQNQVPTVN</sequence>
<dbReference type="EMBL" id="X79695">
    <property type="protein sequence ID" value="CAA56136.1"/>
    <property type="molecule type" value="mRNA"/>
</dbReference>
<dbReference type="PIR" id="S49440">
    <property type="entry name" value="S49440"/>
</dbReference>
<dbReference type="SMR" id="Q90963"/>
<dbReference type="FunCoup" id="Q90963">
    <property type="interactions" value="3"/>
</dbReference>
<dbReference type="STRING" id="9031.ENSGALP00000041949"/>
<dbReference type="PaxDb" id="9031-ENSGALP00000041949"/>
<dbReference type="VEuPathDB" id="HostDB:geneid_396314"/>
<dbReference type="eggNOG" id="KOG0490">
    <property type="taxonomic scope" value="Eukaryota"/>
</dbReference>
<dbReference type="InParanoid" id="Q90963"/>
<dbReference type="OrthoDB" id="6159439at2759"/>
<dbReference type="PhylomeDB" id="Q90963"/>
<dbReference type="Proteomes" id="UP000000539">
    <property type="component" value="Unassembled WGS sequence"/>
</dbReference>
<dbReference type="GO" id="GO:0005634">
    <property type="term" value="C:nucleus"/>
    <property type="evidence" value="ECO:0000318"/>
    <property type="project" value="GO_Central"/>
</dbReference>
<dbReference type="GO" id="GO:0000981">
    <property type="term" value="F:DNA-binding transcription factor activity, RNA polymerase II-specific"/>
    <property type="evidence" value="ECO:0000318"/>
    <property type="project" value="GO_Central"/>
</dbReference>
<dbReference type="GO" id="GO:0000978">
    <property type="term" value="F:RNA polymerase II cis-regulatory region sequence-specific DNA binding"/>
    <property type="evidence" value="ECO:0000318"/>
    <property type="project" value="GO_Central"/>
</dbReference>
<dbReference type="GO" id="GO:0006357">
    <property type="term" value="P:regulation of transcription by RNA polymerase II"/>
    <property type="evidence" value="ECO:0000318"/>
    <property type="project" value="GO_Central"/>
</dbReference>
<dbReference type="CDD" id="cd00086">
    <property type="entry name" value="homeodomain"/>
    <property type="match status" value="1"/>
</dbReference>
<dbReference type="FunFam" id="1.10.10.60:FF:000066">
    <property type="entry name" value="Paired mesoderm homeobox protein 1"/>
    <property type="match status" value="1"/>
</dbReference>
<dbReference type="Gene3D" id="1.10.10.60">
    <property type="entry name" value="Homeodomain-like"/>
    <property type="match status" value="1"/>
</dbReference>
<dbReference type="InterPro" id="IPR001356">
    <property type="entry name" value="HD"/>
</dbReference>
<dbReference type="InterPro" id="IPR017970">
    <property type="entry name" value="Homeobox_CS"/>
</dbReference>
<dbReference type="InterPro" id="IPR009057">
    <property type="entry name" value="Homeodomain-like_sf"/>
</dbReference>
<dbReference type="InterPro" id="IPR003654">
    <property type="entry name" value="OAR_dom"/>
</dbReference>
<dbReference type="InterPro" id="IPR043378">
    <property type="entry name" value="PRRX1/2"/>
</dbReference>
<dbReference type="PANTHER" id="PTHR46385">
    <property type="entry name" value="PAIRED MESODERM HOMEOBOX PROTEIN 1-RELATED"/>
    <property type="match status" value="1"/>
</dbReference>
<dbReference type="PANTHER" id="PTHR46385:SF3">
    <property type="entry name" value="PAIRED MESODERM HOMEOBOX PROTEIN 2"/>
    <property type="match status" value="1"/>
</dbReference>
<dbReference type="Pfam" id="PF00046">
    <property type="entry name" value="Homeodomain"/>
    <property type="match status" value="1"/>
</dbReference>
<dbReference type="Pfam" id="PF03826">
    <property type="entry name" value="OAR"/>
    <property type="match status" value="1"/>
</dbReference>
<dbReference type="SMART" id="SM00389">
    <property type="entry name" value="HOX"/>
    <property type="match status" value="1"/>
</dbReference>
<dbReference type="SUPFAM" id="SSF46689">
    <property type="entry name" value="Homeodomain-like"/>
    <property type="match status" value="1"/>
</dbReference>
<dbReference type="PROSITE" id="PS00027">
    <property type="entry name" value="HOMEOBOX_1"/>
    <property type="match status" value="1"/>
</dbReference>
<dbReference type="PROSITE" id="PS50071">
    <property type="entry name" value="HOMEOBOX_2"/>
    <property type="match status" value="1"/>
</dbReference>
<dbReference type="PROSITE" id="PS50803">
    <property type="entry name" value="OAR"/>
    <property type="match status" value="1"/>
</dbReference>